<name>RS3_STAEQ</name>
<keyword id="KW-1185">Reference proteome</keyword>
<keyword id="KW-0687">Ribonucleoprotein</keyword>
<keyword id="KW-0689">Ribosomal protein</keyword>
<keyword id="KW-0694">RNA-binding</keyword>
<keyword id="KW-0699">rRNA-binding</keyword>
<comment type="function">
    <text evidence="1">Binds the lower part of the 30S subunit head. Binds mRNA in the 70S ribosome, positioning it for translation.</text>
</comment>
<comment type="subunit">
    <text evidence="1">Part of the 30S ribosomal subunit. Forms a tight complex with proteins S10 and S14.</text>
</comment>
<comment type="similarity">
    <text evidence="1">Belongs to the universal ribosomal protein uS3 family.</text>
</comment>
<organism>
    <name type="scientific">Staphylococcus epidermidis (strain ATCC 35984 / DSM 28319 / BCRC 17069 / CCUG 31568 / BM 3577 / RP62A)</name>
    <dbReference type="NCBI Taxonomy" id="176279"/>
    <lineage>
        <taxon>Bacteria</taxon>
        <taxon>Bacillati</taxon>
        <taxon>Bacillota</taxon>
        <taxon>Bacilli</taxon>
        <taxon>Bacillales</taxon>
        <taxon>Staphylococcaceae</taxon>
        <taxon>Staphylococcus</taxon>
    </lineage>
</organism>
<gene>
    <name evidence="1" type="primary">rpsC</name>
    <name type="ordered locus">SERP1825</name>
</gene>
<proteinExistence type="inferred from homology"/>
<feature type="chain" id="PRO_0000130204" description="Small ribosomal subunit protein uS3">
    <location>
        <begin position="1"/>
        <end position="217"/>
    </location>
</feature>
<feature type="domain" description="KH type-2" evidence="1">
    <location>
        <begin position="38"/>
        <end position="106"/>
    </location>
</feature>
<sequence>MGQKINPIGLRVGVIRDWEAKWYAEKDFASLLHEDLKIRKFIDNELKEASVSHVDIERAANRINIAIHTGKPGMVIGKGGSEIEKLRNKLNTLTDKKVHINVIEIKKIDIDARLVAENIARQLENRASFRRVQKQAITRAMKNGAKGIKTQVSGRLGGADIARAEQYSEGTVPLHTLRADIDYAHAEADTTYGKLGVKVWIYRGEVLPTKNTSEGGK</sequence>
<dbReference type="EMBL" id="CP000029">
    <property type="protein sequence ID" value="AAW55157.1"/>
    <property type="molecule type" value="Genomic_DNA"/>
</dbReference>
<dbReference type="RefSeq" id="WP_001829791.1">
    <property type="nucleotide sequence ID" value="NC_002976.3"/>
</dbReference>
<dbReference type="SMR" id="Q5HM05"/>
<dbReference type="STRING" id="176279.SERP1825"/>
<dbReference type="GeneID" id="50018079"/>
<dbReference type="KEGG" id="ser:SERP1825"/>
<dbReference type="eggNOG" id="COG0092">
    <property type="taxonomic scope" value="Bacteria"/>
</dbReference>
<dbReference type="HOGENOM" id="CLU_058591_0_2_9"/>
<dbReference type="Proteomes" id="UP000000531">
    <property type="component" value="Chromosome"/>
</dbReference>
<dbReference type="GO" id="GO:0022627">
    <property type="term" value="C:cytosolic small ribosomal subunit"/>
    <property type="evidence" value="ECO:0007669"/>
    <property type="project" value="TreeGrafter"/>
</dbReference>
<dbReference type="GO" id="GO:0003729">
    <property type="term" value="F:mRNA binding"/>
    <property type="evidence" value="ECO:0007669"/>
    <property type="project" value="UniProtKB-UniRule"/>
</dbReference>
<dbReference type="GO" id="GO:0019843">
    <property type="term" value="F:rRNA binding"/>
    <property type="evidence" value="ECO:0007669"/>
    <property type="project" value="UniProtKB-UniRule"/>
</dbReference>
<dbReference type="GO" id="GO:0003735">
    <property type="term" value="F:structural constituent of ribosome"/>
    <property type="evidence" value="ECO:0007669"/>
    <property type="project" value="InterPro"/>
</dbReference>
<dbReference type="GO" id="GO:0006412">
    <property type="term" value="P:translation"/>
    <property type="evidence" value="ECO:0007669"/>
    <property type="project" value="UniProtKB-UniRule"/>
</dbReference>
<dbReference type="CDD" id="cd02412">
    <property type="entry name" value="KH-II_30S_S3"/>
    <property type="match status" value="1"/>
</dbReference>
<dbReference type="FunFam" id="3.30.300.20:FF:000001">
    <property type="entry name" value="30S ribosomal protein S3"/>
    <property type="match status" value="1"/>
</dbReference>
<dbReference type="Gene3D" id="3.30.300.20">
    <property type="match status" value="1"/>
</dbReference>
<dbReference type="Gene3D" id="3.30.1140.32">
    <property type="entry name" value="Ribosomal protein S3, C-terminal domain"/>
    <property type="match status" value="1"/>
</dbReference>
<dbReference type="HAMAP" id="MF_01309_B">
    <property type="entry name" value="Ribosomal_uS3_B"/>
    <property type="match status" value="1"/>
</dbReference>
<dbReference type="InterPro" id="IPR004087">
    <property type="entry name" value="KH_dom"/>
</dbReference>
<dbReference type="InterPro" id="IPR015946">
    <property type="entry name" value="KH_dom-like_a/b"/>
</dbReference>
<dbReference type="InterPro" id="IPR004044">
    <property type="entry name" value="KH_dom_type_2"/>
</dbReference>
<dbReference type="InterPro" id="IPR009019">
    <property type="entry name" value="KH_sf_prok-type"/>
</dbReference>
<dbReference type="InterPro" id="IPR036419">
    <property type="entry name" value="Ribosomal_S3_C_sf"/>
</dbReference>
<dbReference type="InterPro" id="IPR005704">
    <property type="entry name" value="Ribosomal_uS3_bac-typ"/>
</dbReference>
<dbReference type="InterPro" id="IPR001351">
    <property type="entry name" value="Ribosomal_uS3_C"/>
</dbReference>
<dbReference type="InterPro" id="IPR018280">
    <property type="entry name" value="Ribosomal_uS3_CS"/>
</dbReference>
<dbReference type="NCBIfam" id="TIGR01009">
    <property type="entry name" value="rpsC_bact"/>
    <property type="match status" value="1"/>
</dbReference>
<dbReference type="PANTHER" id="PTHR11760">
    <property type="entry name" value="30S/40S RIBOSOMAL PROTEIN S3"/>
    <property type="match status" value="1"/>
</dbReference>
<dbReference type="PANTHER" id="PTHR11760:SF19">
    <property type="entry name" value="SMALL RIBOSOMAL SUBUNIT PROTEIN US3C"/>
    <property type="match status" value="1"/>
</dbReference>
<dbReference type="Pfam" id="PF07650">
    <property type="entry name" value="KH_2"/>
    <property type="match status" value="1"/>
</dbReference>
<dbReference type="Pfam" id="PF00189">
    <property type="entry name" value="Ribosomal_S3_C"/>
    <property type="match status" value="1"/>
</dbReference>
<dbReference type="SMART" id="SM00322">
    <property type="entry name" value="KH"/>
    <property type="match status" value="1"/>
</dbReference>
<dbReference type="SUPFAM" id="SSF54814">
    <property type="entry name" value="Prokaryotic type KH domain (KH-domain type II)"/>
    <property type="match status" value="1"/>
</dbReference>
<dbReference type="SUPFAM" id="SSF54821">
    <property type="entry name" value="Ribosomal protein S3 C-terminal domain"/>
    <property type="match status" value="1"/>
</dbReference>
<dbReference type="PROSITE" id="PS50823">
    <property type="entry name" value="KH_TYPE_2"/>
    <property type="match status" value="1"/>
</dbReference>
<dbReference type="PROSITE" id="PS00548">
    <property type="entry name" value="RIBOSOMAL_S3"/>
    <property type="match status" value="1"/>
</dbReference>
<reference key="1">
    <citation type="journal article" date="2005" name="J. Bacteriol.">
        <title>Insights on evolution of virulence and resistance from the complete genome analysis of an early methicillin-resistant Staphylococcus aureus strain and a biofilm-producing methicillin-resistant Staphylococcus epidermidis strain.</title>
        <authorList>
            <person name="Gill S.R."/>
            <person name="Fouts D.E."/>
            <person name="Archer G.L."/>
            <person name="Mongodin E.F."/>
            <person name="DeBoy R.T."/>
            <person name="Ravel J."/>
            <person name="Paulsen I.T."/>
            <person name="Kolonay J.F."/>
            <person name="Brinkac L.M."/>
            <person name="Beanan M.J."/>
            <person name="Dodson R.J."/>
            <person name="Daugherty S.C."/>
            <person name="Madupu R."/>
            <person name="Angiuoli S.V."/>
            <person name="Durkin A.S."/>
            <person name="Haft D.H."/>
            <person name="Vamathevan J.J."/>
            <person name="Khouri H."/>
            <person name="Utterback T.R."/>
            <person name="Lee C."/>
            <person name="Dimitrov G."/>
            <person name="Jiang L."/>
            <person name="Qin H."/>
            <person name="Weidman J."/>
            <person name="Tran K."/>
            <person name="Kang K.H."/>
            <person name="Hance I.R."/>
            <person name="Nelson K.E."/>
            <person name="Fraser C.M."/>
        </authorList>
    </citation>
    <scope>NUCLEOTIDE SEQUENCE [LARGE SCALE GENOMIC DNA]</scope>
    <source>
        <strain>ATCC 35984 / DSM 28319 / BCRC 17069 / CCUG 31568 / BM 3577 / RP62A</strain>
    </source>
</reference>
<accession>Q5HM05</accession>
<protein>
    <recommendedName>
        <fullName evidence="1">Small ribosomal subunit protein uS3</fullName>
    </recommendedName>
    <alternativeName>
        <fullName evidence="2">30S ribosomal protein S3</fullName>
    </alternativeName>
</protein>
<evidence type="ECO:0000255" key="1">
    <source>
        <dbReference type="HAMAP-Rule" id="MF_01309"/>
    </source>
</evidence>
<evidence type="ECO:0000305" key="2"/>